<reference key="1">
    <citation type="journal article" date="2006" name="Nat. Biotechnol.">
        <title>Complete genome sequence of the entomopathogenic and metabolically versatile soil bacterium Pseudomonas entomophila.</title>
        <authorList>
            <person name="Vodovar N."/>
            <person name="Vallenet D."/>
            <person name="Cruveiller S."/>
            <person name="Rouy Z."/>
            <person name="Barbe V."/>
            <person name="Acosta C."/>
            <person name="Cattolico L."/>
            <person name="Jubin C."/>
            <person name="Lajus A."/>
            <person name="Segurens B."/>
            <person name="Vacherie B."/>
            <person name="Wincker P."/>
            <person name="Weissenbach J."/>
            <person name="Lemaitre B."/>
            <person name="Medigue C."/>
            <person name="Boccard F."/>
        </authorList>
    </citation>
    <scope>NUCLEOTIDE SEQUENCE [LARGE SCALE GENOMIC DNA]</scope>
    <source>
        <strain>L48</strain>
    </source>
</reference>
<organism>
    <name type="scientific">Pseudomonas entomophila (strain L48)</name>
    <dbReference type="NCBI Taxonomy" id="384676"/>
    <lineage>
        <taxon>Bacteria</taxon>
        <taxon>Pseudomonadati</taxon>
        <taxon>Pseudomonadota</taxon>
        <taxon>Gammaproteobacteria</taxon>
        <taxon>Pseudomonadales</taxon>
        <taxon>Pseudomonadaceae</taxon>
        <taxon>Pseudomonas</taxon>
    </lineage>
</organism>
<sequence length="405" mass="45164">MADVKKVVLAYSGGLDTSVILKWLQDTYNCEVVTFTADLGQGEEVEPARAKAQAMGVKEIYIDDLREEFVRDFVFPMFRANTVYEGEYLLGTSIARPLIAKRLIEIANETGADAISHGATGKGNDQVRFELGAYALKPGVKVIAPWREWDLLSREKLMDYAEKHGIPIERHGKKKSPYSMDANLLHISYEGGVLEDTWTEHEEDMWRWSVSPENAPDQATYIELTYRNGDIVAIDGVEKSPATVLADLNRIGGANGIGRLDIVENRYVGMKSRGCYETPGGTIMLKAHRAIESITLDREVAHLKDELMPKYASLIYTGYWWSPERLMLQQMIDASQVNVNGVVRLKLYKGNVTVVGRKSDDSLFDANIATFEEDGGAYNQADAAGFIKLNALRMRIAANKGRSLL</sequence>
<name>ASSY_PSEE4</name>
<gene>
    <name evidence="1" type="primary">argG</name>
    <name type="ordered locus">PSEEN1210</name>
</gene>
<protein>
    <recommendedName>
        <fullName evidence="1">Argininosuccinate synthase</fullName>
        <ecNumber evidence="1">6.3.4.5</ecNumber>
    </recommendedName>
    <alternativeName>
        <fullName evidence="1">Citrulline--aspartate ligase</fullName>
    </alternativeName>
</protein>
<dbReference type="EC" id="6.3.4.5" evidence="1"/>
<dbReference type="EMBL" id="CT573326">
    <property type="protein sequence ID" value="CAK14105.1"/>
    <property type="molecule type" value="Genomic_DNA"/>
</dbReference>
<dbReference type="RefSeq" id="WP_003254941.1">
    <property type="nucleotide sequence ID" value="NC_008027.1"/>
</dbReference>
<dbReference type="SMR" id="Q1IE03"/>
<dbReference type="STRING" id="384676.PSEEN1210"/>
<dbReference type="KEGG" id="pen:PSEEN1210"/>
<dbReference type="eggNOG" id="COG0137">
    <property type="taxonomic scope" value="Bacteria"/>
</dbReference>
<dbReference type="HOGENOM" id="CLU_032784_4_2_6"/>
<dbReference type="OrthoDB" id="9801641at2"/>
<dbReference type="UniPathway" id="UPA00068">
    <property type="reaction ID" value="UER00113"/>
</dbReference>
<dbReference type="Proteomes" id="UP000000658">
    <property type="component" value="Chromosome"/>
</dbReference>
<dbReference type="GO" id="GO:0005737">
    <property type="term" value="C:cytoplasm"/>
    <property type="evidence" value="ECO:0007669"/>
    <property type="project" value="UniProtKB-SubCell"/>
</dbReference>
<dbReference type="GO" id="GO:0004055">
    <property type="term" value="F:argininosuccinate synthase activity"/>
    <property type="evidence" value="ECO:0007669"/>
    <property type="project" value="UniProtKB-UniRule"/>
</dbReference>
<dbReference type="GO" id="GO:0005524">
    <property type="term" value="F:ATP binding"/>
    <property type="evidence" value="ECO:0007669"/>
    <property type="project" value="UniProtKB-UniRule"/>
</dbReference>
<dbReference type="GO" id="GO:0000053">
    <property type="term" value="P:argininosuccinate metabolic process"/>
    <property type="evidence" value="ECO:0007669"/>
    <property type="project" value="TreeGrafter"/>
</dbReference>
<dbReference type="GO" id="GO:0006526">
    <property type="term" value="P:L-arginine biosynthetic process"/>
    <property type="evidence" value="ECO:0007669"/>
    <property type="project" value="UniProtKB-UniRule"/>
</dbReference>
<dbReference type="GO" id="GO:0000050">
    <property type="term" value="P:urea cycle"/>
    <property type="evidence" value="ECO:0007669"/>
    <property type="project" value="TreeGrafter"/>
</dbReference>
<dbReference type="CDD" id="cd01999">
    <property type="entry name" value="ASS"/>
    <property type="match status" value="1"/>
</dbReference>
<dbReference type="FunFam" id="1.20.5.470:FF:000001">
    <property type="entry name" value="Argininosuccinate synthase"/>
    <property type="match status" value="1"/>
</dbReference>
<dbReference type="FunFam" id="3.40.50.620:FF:000019">
    <property type="entry name" value="Argininosuccinate synthase"/>
    <property type="match status" value="1"/>
</dbReference>
<dbReference type="FunFam" id="3.90.1260.10:FF:000001">
    <property type="entry name" value="Argininosuccinate synthase"/>
    <property type="match status" value="1"/>
</dbReference>
<dbReference type="Gene3D" id="3.90.1260.10">
    <property type="entry name" value="Argininosuccinate synthetase, chain A, domain 2"/>
    <property type="match status" value="1"/>
</dbReference>
<dbReference type="Gene3D" id="3.40.50.620">
    <property type="entry name" value="HUPs"/>
    <property type="match status" value="1"/>
</dbReference>
<dbReference type="Gene3D" id="1.20.5.470">
    <property type="entry name" value="Single helix bin"/>
    <property type="match status" value="1"/>
</dbReference>
<dbReference type="HAMAP" id="MF_00005">
    <property type="entry name" value="Arg_succ_synth_type1"/>
    <property type="match status" value="1"/>
</dbReference>
<dbReference type="InterPro" id="IPR048268">
    <property type="entry name" value="Arginosuc_syn_C"/>
</dbReference>
<dbReference type="InterPro" id="IPR048267">
    <property type="entry name" value="Arginosuc_syn_N"/>
</dbReference>
<dbReference type="InterPro" id="IPR001518">
    <property type="entry name" value="Arginosuc_synth"/>
</dbReference>
<dbReference type="InterPro" id="IPR018223">
    <property type="entry name" value="Arginosuc_synth_CS"/>
</dbReference>
<dbReference type="InterPro" id="IPR023434">
    <property type="entry name" value="Arginosuc_synth_type_1_subfam"/>
</dbReference>
<dbReference type="InterPro" id="IPR024074">
    <property type="entry name" value="AS_cat/multimer_dom_body"/>
</dbReference>
<dbReference type="InterPro" id="IPR014729">
    <property type="entry name" value="Rossmann-like_a/b/a_fold"/>
</dbReference>
<dbReference type="NCBIfam" id="TIGR00032">
    <property type="entry name" value="argG"/>
    <property type="match status" value="1"/>
</dbReference>
<dbReference type="NCBIfam" id="NF001770">
    <property type="entry name" value="PRK00509.1"/>
    <property type="match status" value="1"/>
</dbReference>
<dbReference type="PANTHER" id="PTHR11587">
    <property type="entry name" value="ARGININOSUCCINATE SYNTHASE"/>
    <property type="match status" value="1"/>
</dbReference>
<dbReference type="PANTHER" id="PTHR11587:SF2">
    <property type="entry name" value="ARGININOSUCCINATE SYNTHASE"/>
    <property type="match status" value="1"/>
</dbReference>
<dbReference type="Pfam" id="PF20979">
    <property type="entry name" value="Arginosuc_syn_C"/>
    <property type="match status" value="1"/>
</dbReference>
<dbReference type="Pfam" id="PF00764">
    <property type="entry name" value="Arginosuc_synth"/>
    <property type="match status" value="1"/>
</dbReference>
<dbReference type="SUPFAM" id="SSF52402">
    <property type="entry name" value="Adenine nucleotide alpha hydrolases-like"/>
    <property type="match status" value="1"/>
</dbReference>
<dbReference type="SUPFAM" id="SSF69864">
    <property type="entry name" value="Argininosuccinate synthetase, C-terminal domain"/>
    <property type="match status" value="1"/>
</dbReference>
<dbReference type="PROSITE" id="PS00564">
    <property type="entry name" value="ARGININOSUCCIN_SYN_1"/>
    <property type="match status" value="1"/>
</dbReference>
<dbReference type="PROSITE" id="PS00565">
    <property type="entry name" value="ARGININOSUCCIN_SYN_2"/>
    <property type="match status" value="1"/>
</dbReference>
<accession>Q1IE03</accession>
<comment type="catalytic activity">
    <reaction evidence="1">
        <text>L-citrulline + L-aspartate + ATP = 2-(N(omega)-L-arginino)succinate + AMP + diphosphate + H(+)</text>
        <dbReference type="Rhea" id="RHEA:10932"/>
        <dbReference type="ChEBI" id="CHEBI:15378"/>
        <dbReference type="ChEBI" id="CHEBI:29991"/>
        <dbReference type="ChEBI" id="CHEBI:30616"/>
        <dbReference type="ChEBI" id="CHEBI:33019"/>
        <dbReference type="ChEBI" id="CHEBI:57472"/>
        <dbReference type="ChEBI" id="CHEBI:57743"/>
        <dbReference type="ChEBI" id="CHEBI:456215"/>
        <dbReference type="EC" id="6.3.4.5"/>
    </reaction>
</comment>
<comment type="pathway">
    <text evidence="1">Amino-acid biosynthesis; L-arginine biosynthesis; L-arginine from L-ornithine and carbamoyl phosphate: step 2/3.</text>
</comment>
<comment type="subunit">
    <text evidence="1">Homotetramer.</text>
</comment>
<comment type="subcellular location">
    <subcellularLocation>
        <location evidence="1">Cytoplasm</location>
    </subcellularLocation>
</comment>
<comment type="similarity">
    <text evidence="1">Belongs to the argininosuccinate synthase family. Type 1 subfamily.</text>
</comment>
<proteinExistence type="inferred from homology"/>
<feature type="chain" id="PRO_1000000424" description="Argininosuccinate synthase">
    <location>
        <begin position="1"/>
        <end position="405"/>
    </location>
</feature>
<feature type="binding site" evidence="1">
    <location>
        <begin position="10"/>
        <end position="18"/>
    </location>
    <ligand>
        <name>ATP</name>
        <dbReference type="ChEBI" id="CHEBI:30616"/>
    </ligand>
</feature>
<feature type="binding site" evidence="1">
    <location>
        <position position="37"/>
    </location>
    <ligand>
        <name>ATP</name>
        <dbReference type="ChEBI" id="CHEBI:30616"/>
    </ligand>
</feature>
<feature type="binding site" evidence="1">
    <location>
        <position position="88"/>
    </location>
    <ligand>
        <name>L-citrulline</name>
        <dbReference type="ChEBI" id="CHEBI:57743"/>
    </ligand>
</feature>
<feature type="binding site" evidence="1">
    <location>
        <position position="93"/>
    </location>
    <ligand>
        <name>L-citrulline</name>
        <dbReference type="ChEBI" id="CHEBI:57743"/>
    </ligand>
</feature>
<feature type="binding site" evidence="1">
    <location>
        <position position="118"/>
    </location>
    <ligand>
        <name>ATP</name>
        <dbReference type="ChEBI" id="CHEBI:30616"/>
    </ligand>
</feature>
<feature type="binding site" evidence="1">
    <location>
        <position position="120"/>
    </location>
    <ligand>
        <name>L-aspartate</name>
        <dbReference type="ChEBI" id="CHEBI:29991"/>
    </ligand>
</feature>
<feature type="binding site" evidence="1">
    <location>
        <position position="124"/>
    </location>
    <ligand>
        <name>L-aspartate</name>
        <dbReference type="ChEBI" id="CHEBI:29991"/>
    </ligand>
</feature>
<feature type="binding site" evidence="1">
    <location>
        <position position="124"/>
    </location>
    <ligand>
        <name>L-citrulline</name>
        <dbReference type="ChEBI" id="CHEBI:57743"/>
    </ligand>
</feature>
<feature type="binding site" evidence="1">
    <location>
        <position position="125"/>
    </location>
    <ligand>
        <name>L-aspartate</name>
        <dbReference type="ChEBI" id="CHEBI:29991"/>
    </ligand>
</feature>
<feature type="binding site" evidence="1">
    <location>
        <position position="128"/>
    </location>
    <ligand>
        <name>L-citrulline</name>
        <dbReference type="ChEBI" id="CHEBI:57743"/>
    </ligand>
</feature>
<feature type="binding site" evidence="1">
    <location>
        <position position="179"/>
    </location>
    <ligand>
        <name>L-citrulline</name>
        <dbReference type="ChEBI" id="CHEBI:57743"/>
    </ligand>
</feature>
<feature type="binding site" evidence="1">
    <location>
        <position position="188"/>
    </location>
    <ligand>
        <name>L-citrulline</name>
        <dbReference type="ChEBI" id="CHEBI:57743"/>
    </ligand>
</feature>
<feature type="binding site" evidence="1">
    <location>
        <position position="264"/>
    </location>
    <ligand>
        <name>L-citrulline</name>
        <dbReference type="ChEBI" id="CHEBI:57743"/>
    </ligand>
</feature>
<feature type="binding site" evidence="1">
    <location>
        <position position="276"/>
    </location>
    <ligand>
        <name>L-citrulline</name>
        <dbReference type="ChEBI" id="CHEBI:57743"/>
    </ligand>
</feature>
<keyword id="KW-0028">Amino-acid biosynthesis</keyword>
<keyword id="KW-0055">Arginine biosynthesis</keyword>
<keyword id="KW-0067">ATP-binding</keyword>
<keyword id="KW-0963">Cytoplasm</keyword>
<keyword id="KW-0436">Ligase</keyword>
<keyword id="KW-0547">Nucleotide-binding</keyword>
<evidence type="ECO:0000255" key="1">
    <source>
        <dbReference type="HAMAP-Rule" id="MF_00005"/>
    </source>
</evidence>